<proteinExistence type="inferred from homology"/>
<sequence length="249" mass="26661">MKIVVTNDDGPHSPLLEPLVRGLEAVGNEVVVVVPERPRSAAGLARTYHKPLRVRRLGGYYVVNGFPADAVFLALKLIAPDAELVISGVNVGENIGIEATYGSGTVGAALQAGVLGVPSIAASMEVGGDVDFMIKVVEGAVASARAGLDGVLAVSINIPSVWKGGVYCVRKLARAVYRERLYEGVDPRGEKYYWRWGPRRSEFEPDTDAYYFYYMRGVTVLGLSESGVASVENFGRKLGQLIGAVKVDC</sequence>
<keyword id="KW-0963">Cytoplasm</keyword>
<keyword id="KW-0378">Hydrolase</keyword>
<keyword id="KW-0479">Metal-binding</keyword>
<keyword id="KW-0547">Nucleotide-binding</keyword>
<keyword id="KW-1185">Reference proteome</keyword>
<dbReference type="EC" id="3.1.3.5" evidence="1"/>
<dbReference type="EMBL" id="AE009441">
    <property type="protein sequence ID" value="AAL64979.1"/>
    <property type="molecule type" value="Genomic_DNA"/>
</dbReference>
<dbReference type="RefSeq" id="WP_011009446.1">
    <property type="nucleotide sequence ID" value="NC_003364.1"/>
</dbReference>
<dbReference type="SMR" id="Q8ZSY4"/>
<dbReference type="STRING" id="178306.PAE3523"/>
<dbReference type="EnsemblBacteria" id="AAL64979">
    <property type="protein sequence ID" value="AAL64979"/>
    <property type="gene ID" value="PAE3523"/>
</dbReference>
<dbReference type="GeneID" id="1466113"/>
<dbReference type="KEGG" id="pai:PAE3523"/>
<dbReference type="PATRIC" id="fig|178306.9.peg.2652"/>
<dbReference type="eggNOG" id="arCOG02303">
    <property type="taxonomic scope" value="Archaea"/>
</dbReference>
<dbReference type="HOGENOM" id="CLU_045192_1_3_2"/>
<dbReference type="InParanoid" id="Q8ZSY4"/>
<dbReference type="Proteomes" id="UP000002439">
    <property type="component" value="Chromosome"/>
</dbReference>
<dbReference type="GO" id="GO:0005737">
    <property type="term" value="C:cytoplasm"/>
    <property type="evidence" value="ECO:0007669"/>
    <property type="project" value="UniProtKB-SubCell"/>
</dbReference>
<dbReference type="GO" id="GO:0008253">
    <property type="term" value="F:5'-nucleotidase activity"/>
    <property type="evidence" value="ECO:0007669"/>
    <property type="project" value="UniProtKB-UniRule"/>
</dbReference>
<dbReference type="GO" id="GO:0046872">
    <property type="term" value="F:metal ion binding"/>
    <property type="evidence" value="ECO:0007669"/>
    <property type="project" value="UniProtKB-UniRule"/>
</dbReference>
<dbReference type="GO" id="GO:0000166">
    <property type="term" value="F:nucleotide binding"/>
    <property type="evidence" value="ECO:0007669"/>
    <property type="project" value="UniProtKB-KW"/>
</dbReference>
<dbReference type="Gene3D" id="3.40.1210.10">
    <property type="entry name" value="Survival protein SurE-like phosphatase/nucleotidase"/>
    <property type="match status" value="1"/>
</dbReference>
<dbReference type="HAMAP" id="MF_00060">
    <property type="entry name" value="SurE"/>
    <property type="match status" value="1"/>
</dbReference>
<dbReference type="InterPro" id="IPR030048">
    <property type="entry name" value="SurE"/>
</dbReference>
<dbReference type="InterPro" id="IPR002828">
    <property type="entry name" value="SurE-like_Pase/nucleotidase"/>
</dbReference>
<dbReference type="InterPro" id="IPR036523">
    <property type="entry name" value="SurE-like_sf"/>
</dbReference>
<dbReference type="NCBIfam" id="TIGR00087">
    <property type="entry name" value="surE"/>
    <property type="match status" value="1"/>
</dbReference>
<dbReference type="PANTHER" id="PTHR30457">
    <property type="entry name" value="5'-NUCLEOTIDASE SURE"/>
    <property type="match status" value="1"/>
</dbReference>
<dbReference type="PANTHER" id="PTHR30457:SF0">
    <property type="entry name" value="PHOSPHATASE, PUTATIVE (AFU_ORTHOLOGUE AFUA_4G01070)-RELATED"/>
    <property type="match status" value="1"/>
</dbReference>
<dbReference type="Pfam" id="PF01975">
    <property type="entry name" value="SurE"/>
    <property type="match status" value="1"/>
</dbReference>
<dbReference type="SUPFAM" id="SSF64167">
    <property type="entry name" value="SurE-like"/>
    <property type="match status" value="1"/>
</dbReference>
<feature type="chain" id="PRO_0000111870" description="5'-nucleotidase SurE 2">
    <location>
        <begin position="1"/>
        <end position="249"/>
    </location>
</feature>
<feature type="binding site" evidence="1">
    <location>
        <position position="8"/>
    </location>
    <ligand>
        <name>a divalent metal cation</name>
        <dbReference type="ChEBI" id="CHEBI:60240"/>
    </ligand>
</feature>
<feature type="binding site" evidence="1">
    <location>
        <position position="9"/>
    </location>
    <ligand>
        <name>a divalent metal cation</name>
        <dbReference type="ChEBI" id="CHEBI:60240"/>
    </ligand>
</feature>
<feature type="binding site" evidence="1">
    <location>
        <position position="40"/>
    </location>
    <ligand>
        <name>a divalent metal cation</name>
        <dbReference type="ChEBI" id="CHEBI:60240"/>
    </ligand>
</feature>
<feature type="binding site" evidence="1">
    <location>
        <position position="90"/>
    </location>
    <ligand>
        <name>a divalent metal cation</name>
        <dbReference type="ChEBI" id="CHEBI:60240"/>
    </ligand>
</feature>
<evidence type="ECO:0000255" key="1">
    <source>
        <dbReference type="HAMAP-Rule" id="MF_00060"/>
    </source>
</evidence>
<reference key="1">
    <citation type="journal article" date="2002" name="Proc. Natl. Acad. Sci. U.S.A.">
        <title>Genome sequence of the hyperthermophilic crenarchaeon Pyrobaculum aerophilum.</title>
        <authorList>
            <person name="Fitz-Gibbon S.T."/>
            <person name="Ladner H."/>
            <person name="Kim U.-J."/>
            <person name="Stetter K.O."/>
            <person name="Simon M.I."/>
            <person name="Miller J.H."/>
        </authorList>
    </citation>
    <scope>NUCLEOTIDE SEQUENCE [LARGE SCALE GENOMIC DNA]</scope>
    <source>
        <strain>ATCC 51768 / DSM 7523 / JCM 9630 / CIP 104966 / NBRC 100827 / IM2</strain>
    </source>
</reference>
<accession>Q8ZSY4</accession>
<organism>
    <name type="scientific">Pyrobaculum aerophilum (strain ATCC 51768 / DSM 7523 / JCM 9630 / CIP 104966 / NBRC 100827 / IM2)</name>
    <dbReference type="NCBI Taxonomy" id="178306"/>
    <lineage>
        <taxon>Archaea</taxon>
        <taxon>Thermoproteota</taxon>
        <taxon>Thermoprotei</taxon>
        <taxon>Thermoproteales</taxon>
        <taxon>Thermoproteaceae</taxon>
        <taxon>Pyrobaculum</taxon>
    </lineage>
</organism>
<name>SURE2_PYRAE</name>
<protein>
    <recommendedName>
        <fullName evidence="1">5'-nucleotidase SurE 2</fullName>
        <ecNumber evidence="1">3.1.3.5</ecNumber>
    </recommendedName>
    <alternativeName>
        <fullName evidence="1">Nucleoside 5'-monophosphate phosphohydrolase 2</fullName>
    </alternativeName>
</protein>
<comment type="function">
    <text evidence="1">Nucleotidase that shows phosphatase activity on nucleoside 5'-monophosphates.</text>
</comment>
<comment type="catalytic activity">
    <reaction evidence="1">
        <text>a ribonucleoside 5'-phosphate + H2O = a ribonucleoside + phosphate</text>
        <dbReference type="Rhea" id="RHEA:12484"/>
        <dbReference type="ChEBI" id="CHEBI:15377"/>
        <dbReference type="ChEBI" id="CHEBI:18254"/>
        <dbReference type="ChEBI" id="CHEBI:43474"/>
        <dbReference type="ChEBI" id="CHEBI:58043"/>
        <dbReference type="EC" id="3.1.3.5"/>
    </reaction>
</comment>
<comment type="cofactor">
    <cofactor evidence="1">
        <name>a divalent metal cation</name>
        <dbReference type="ChEBI" id="CHEBI:60240"/>
    </cofactor>
    <text evidence="1">Binds 1 divalent metal cation per subunit.</text>
</comment>
<comment type="subcellular location">
    <subcellularLocation>
        <location evidence="1">Cytoplasm</location>
    </subcellularLocation>
</comment>
<comment type="similarity">
    <text evidence="1">Belongs to the SurE nucleotidase family.</text>
</comment>
<gene>
    <name evidence="1" type="primary">surE2</name>
    <name type="ordered locus">PAE3523</name>
</gene>